<sequence length="238" mass="26320">MGRKWNNIKEKKAQKDKNTSRIYAKFGKEIYVAAKSGEPNPESNQALRLVLERAKTYSVPNHIIEKAIDKAKGAGDENFDHLRYEGFGPSGSMLIVDALTNNVNRTASDVRAAFGKNGGNMGVSGSVAYMFDHVATFGIEGKSVDEILETLMEQDVDVNDVIDDNGLTIVYAEPDQFAVVQDALRAAGVEEFKVAEFEMLPQTDIELSEADQVTFEKLIDALEDLEDVQNVFHNVDLK</sequence>
<proteinExistence type="evidence at protein level"/>
<protein>
    <recommendedName>
        <fullName evidence="1">Probable transcriptional regulatory protein SA0624</fullName>
    </recommendedName>
</protein>
<keyword id="KW-0963">Cytoplasm</keyword>
<keyword id="KW-0238">DNA-binding</keyword>
<keyword id="KW-0804">Transcription</keyword>
<keyword id="KW-0805">Transcription regulation</keyword>
<gene>
    <name type="ordered locus">SA0624</name>
</gene>
<comment type="subcellular location">
    <subcellularLocation>
        <location evidence="1">Cytoplasm</location>
    </subcellularLocation>
</comment>
<comment type="similarity">
    <text evidence="1">Belongs to the TACO1 family. YeeN subfamily.</text>
</comment>
<comment type="sequence caution" evidence="2">
    <conflict type="erroneous initiation">
        <sequence resource="EMBL-CDS" id="BAB41857"/>
    </conflict>
</comment>
<name>Y624_STAAN</name>
<accession>P67182</accession>
<accession>Q8NXR2</accession>
<accession>Q99VV2</accession>
<dbReference type="EMBL" id="BA000018">
    <property type="protein sequence ID" value="BAB41857.1"/>
    <property type="status" value="ALT_INIT"/>
    <property type="molecule type" value="Genomic_DNA"/>
</dbReference>
<dbReference type="PIR" id="F89837">
    <property type="entry name" value="F89837"/>
</dbReference>
<dbReference type="RefSeq" id="WP_000532966.1">
    <property type="nucleotide sequence ID" value="NC_002745.2"/>
</dbReference>
<dbReference type="SMR" id="P67182"/>
<dbReference type="EnsemblBacteria" id="BAB41857">
    <property type="protein sequence ID" value="BAB41857"/>
    <property type="gene ID" value="BAB41857"/>
</dbReference>
<dbReference type="KEGG" id="sau:SA0624"/>
<dbReference type="HOGENOM" id="CLU_062974_4_0_9"/>
<dbReference type="GO" id="GO:0005829">
    <property type="term" value="C:cytosol"/>
    <property type="evidence" value="ECO:0007669"/>
    <property type="project" value="TreeGrafter"/>
</dbReference>
<dbReference type="GO" id="GO:0003677">
    <property type="term" value="F:DNA binding"/>
    <property type="evidence" value="ECO:0007669"/>
    <property type="project" value="UniProtKB-UniRule"/>
</dbReference>
<dbReference type="GO" id="GO:0006355">
    <property type="term" value="P:regulation of DNA-templated transcription"/>
    <property type="evidence" value="ECO:0007669"/>
    <property type="project" value="UniProtKB-UniRule"/>
</dbReference>
<dbReference type="FunFam" id="1.10.10.200:FF:000003">
    <property type="entry name" value="Probable transcriptional regulatory protein YeeN"/>
    <property type="match status" value="1"/>
</dbReference>
<dbReference type="Gene3D" id="1.10.10.200">
    <property type="match status" value="1"/>
</dbReference>
<dbReference type="Gene3D" id="3.30.70.980">
    <property type="match status" value="2"/>
</dbReference>
<dbReference type="HAMAP" id="MF_00693">
    <property type="entry name" value="Transcrip_reg_TACO1"/>
    <property type="match status" value="1"/>
</dbReference>
<dbReference type="HAMAP" id="MF_00918">
    <property type="entry name" value="Transcrip_reg_TACO1_YeeN"/>
    <property type="match status" value="1"/>
</dbReference>
<dbReference type="InterPro" id="IPR017856">
    <property type="entry name" value="Integrase-like_N"/>
</dbReference>
<dbReference type="InterPro" id="IPR048300">
    <property type="entry name" value="TACO1_YebC-like_2nd/3rd_dom"/>
</dbReference>
<dbReference type="InterPro" id="IPR049083">
    <property type="entry name" value="TACO1_YebC_N"/>
</dbReference>
<dbReference type="InterPro" id="IPR002876">
    <property type="entry name" value="Transcrip_reg_TACO1-like"/>
</dbReference>
<dbReference type="InterPro" id="IPR026564">
    <property type="entry name" value="Transcrip_reg_TACO1-like_dom3"/>
</dbReference>
<dbReference type="InterPro" id="IPR026562">
    <property type="entry name" value="Transcrip_reg_TACO1_YeeN"/>
</dbReference>
<dbReference type="InterPro" id="IPR029072">
    <property type="entry name" value="YebC-like"/>
</dbReference>
<dbReference type="NCBIfam" id="NF001030">
    <property type="entry name" value="PRK00110.1"/>
    <property type="match status" value="1"/>
</dbReference>
<dbReference type="NCBIfam" id="NF009044">
    <property type="entry name" value="PRK12378.1"/>
    <property type="match status" value="1"/>
</dbReference>
<dbReference type="NCBIfam" id="TIGR01033">
    <property type="entry name" value="YebC/PmpR family DNA-binding transcriptional regulator"/>
    <property type="match status" value="1"/>
</dbReference>
<dbReference type="PANTHER" id="PTHR12532">
    <property type="entry name" value="TRANSLATIONAL ACTIVATOR OF CYTOCHROME C OXIDASE 1"/>
    <property type="match status" value="1"/>
</dbReference>
<dbReference type="PANTHER" id="PTHR12532:SF0">
    <property type="entry name" value="TRANSLATIONAL ACTIVATOR OF CYTOCHROME C OXIDASE 1"/>
    <property type="match status" value="1"/>
</dbReference>
<dbReference type="Pfam" id="PF20772">
    <property type="entry name" value="TACO1_YebC_N"/>
    <property type="match status" value="1"/>
</dbReference>
<dbReference type="Pfam" id="PF01709">
    <property type="entry name" value="Transcrip_reg"/>
    <property type="match status" value="1"/>
</dbReference>
<dbReference type="SUPFAM" id="SSF75625">
    <property type="entry name" value="YebC-like"/>
    <property type="match status" value="1"/>
</dbReference>
<organism>
    <name type="scientific">Staphylococcus aureus (strain N315)</name>
    <dbReference type="NCBI Taxonomy" id="158879"/>
    <lineage>
        <taxon>Bacteria</taxon>
        <taxon>Bacillati</taxon>
        <taxon>Bacillota</taxon>
        <taxon>Bacilli</taxon>
        <taxon>Bacillales</taxon>
        <taxon>Staphylococcaceae</taxon>
        <taxon>Staphylococcus</taxon>
    </lineage>
</organism>
<evidence type="ECO:0000255" key="1">
    <source>
        <dbReference type="HAMAP-Rule" id="MF_00918"/>
    </source>
</evidence>
<evidence type="ECO:0000305" key="2"/>
<feature type="chain" id="PRO_0000175893" description="Probable transcriptional regulatory protein SA0624">
    <location>
        <begin position="1"/>
        <end position="238"/>
    </location>
</feature>
<reference key="1">
    <citation type="journal article" date="2001" name="Lancet">
        <title>Whole genome sequencing of meticillin-resistant Staphylococcus aureus.</title>
        <authorList>
            <person name="Kuroda M."/>
            <person name="Ohta T."/>
            <person name="Uchiyama I."/>
            <person name="Baba T."/>
            <person name="Yuzawa H."/>
            <person name="Kobayashi I."/>
            <person name="Cui L."/>
            <person name="Oguchi A."/>
            <person name="Aoki K."/>
            <person name="Nagai Y."/>
            <person name="Lian J.-Q."/>
            <person name="Ito T."/>
            <person name="Kanamori M."/>
            <person name="Matsumaru H."/>
            <person name="Maruyama A."/>
            <person name="Murakami H."/>
            <person name="Hosoyama A."/>
            <person name="Mizutani-Ui Y."/>
            <person name="Takahashi N.K."/>
            <person name="Sawano T."/>
            <person name="Inoue R."/>
            <person name="Kaito C."/>
            <person name="Sekimizu K."/>
            <person name="Hirakawa H."/>
            <person name="Kuhara S."/>
            <person name="Goto S."/>
            <person name="Yabuzaki J."/>
            <person name="Kanehisa M."/>
            <person name="Yamashita A."/>
            <person name="Oshima K."/>
            <person name="Furuya K."/>
            <person name="Yoshino C."/>
            <person name="Shiba T."/>
            <person name="Hattori M."/>
            <person name="Ogasawara N."/>
            <person name="Hayashi H."/>
            <person name="Hiramatsu K."/>
        </authorList>
    </citation>
    <scope>NUCLEOTIDE SEQUENCE [LARGE SCALE GENOMIC DNA]</scope>
    <source>
        <strain>N315</strain>
    </source>
</reference>
<reference key="2">
    <citation type="submission" date="2007-10" db="UniProtKB">
        <title>Shotgun proteomic analysis of total and membrane protein extracts of S. aureus strain N315.</title>
        <authorList>
            <person name="Vaezzadeh A.R."/>
            <person name="Deshusses J."/>
            <person name="Lescuyer P."/>
            <person name="Hochstrasser D.F."/>
        </authorList>
    </citation>
    <scope>IDENTIFICATION BY MASS SPECTROMETRY [LARGE SCALE ANALYSIS]</scope>
    <source>
        <strain>N315</strain>
    </source>
</reference>